<protein>
    <recommendedName>
        <fullName>Krueppel-like factor 1</fullName>
    </recommendedName>
    <alternativeName>
        <fullName>Erythroid krueppel-like transcription factor</fullName>
        <shortName>EKLF</shortName>
    </alternativeName>
</protein>
<organism>
    <name type="scientific">Homo sapiens</name>
    <name type="common">Human</name>
    <dbReference type="NCBI Taxonomy" id="9606"/>
    <lineage>
        <taxon>Eukaryota</taxon>
        <taxon>Metazoa</taxon>
        <taxon>Chordata</taxon>
        <taxon>Craniata</taxon>
        <taxon>Vertebrata</taxon>
        <taxon>Euteleostomi</taxon>
        <taxon>Mammalia</taxon>
        <taxon>Eutheria</taxon>
        <taxon>Euarchontoglires</taxon>
        <taxon>Primates</taxon>
        <taxon>Haplorrhini</taxon>
        <taxon>Catarrhini</taxon>
        <taxon>Hominidae</taxon>
        <taxon>Homo</taxon>
    </lineage>
</organism>
<dbReference type="EMBL" id="U37106">
    <property type="protein sequence ID" value="AAC50562.1"/>
    <property type="molecule type" value="Genomic_DNA"/>
</dbReference>
<dbReference type="EMBL" id="U65404">
    <property type="protein sequence ID" value="AAC51108.1"/>
    <property type="molecule type" value="mRNA"/>
</dbReference>
<dbReference type="EMBL" id="AD000092">
    <property type="protein sequence ID" value="AAB51173.1"/>
    <property type="molecule type" value="Genomic_DNA"/>
</dbReference>
<dbReference type="EMBL" id="BC033580">
    <property type="protein sequence ID" value="AAH33580.1"/>
    <property type="molecule type" value="mRNA"/>
</dbReference>
<dbReference type="CCDS" id="CCDS12285.1"/>
<dbReference type="PIR" id="T45072">
    <property type="entry name" value="T45072"/>
</dbReference>
<dbReference type="RefSeq" id="NP_006554.1">
    <property type="nucleotide sequence ID" value="NM_006563.5"/>
</dbReference>
<dbReference type="PDB" id="2L2I">
    <property type="method" value="NMR"/>
    <property type="chains" value="B=51-90"/>
</dbReference>
<dbReference type="PDB" id="2MBH">
    <property type="method" value="NMR"/>
    <property type="chains" value="B=2-40"/>
</dbReference>
<dbReference type="PDB" id="2N23">
    <property type="method" value="NMR"/>
    <property type="chains" value="B=22-40"/>
</dbReference>
<dbReference type="PDBsum" id="2L2I"/>
<dbReference type="PDBsum" id="2MBH"/>
<dbReference type="PDBsum" id="2N23"/>
<dbReference type="BMRB" id="Q13351"/>
<dbReference type="SMR" id="Q13351"/>
<dbReference type="BioGRID" id="115904">
    <property type="interactions" value="36"/>
</dbReference>
<dbReference type="DIP" id="DIP-43776N"/>
<dbReference type="FunCoup" id="Q13351">
    <property type="interactions" value="538"/>
</dbReference>
<dbReference type="IntAct" id="Q13351">
    <property type="interactions" value="23"/>
</dbReference>
<dbReference type="MINT" id="Q13351"/>
<dbReference type="STRING" id="9606.ENSP00000264834"/>
<dbReference type="ChEMBL" id="CHEMBL3407313"/>
<dbReference type="GlyGen" id="Q13351">
    <property type="glycosylation" value="1 site"/>
</dbReference>
<dbReference type="iPTMnet" id="Q13351"/>
<dbReference type="PhosphoSitePlus" id="Q13351"/>
<dbReference type="BioMuta" id="KLF1"/>
<dbReference type="DMDM" id="2501699"/>
<dbReference type="jPOST" id="Q13351"/>
<dbReference type="MassIVE" id="Q13351"/>
<dbReference type="PaxDb" id="9606-ENSP00000264834"/>
<dbReference type="PeptideAtlas" id="Q13351"/>
<dbReference type="ProteomicsDB" id="59335"/>
<dbReference type="Pumba" id="Q13351"/>
<dbReference type="Antibodypedia" id="13415">
    <property type="antibodies" value="411 antibodies from 37 providers"/>
</dbReference>
<dbReference type="DNASU" id="10661"/>
<dbReference type="Ensembl" id="ENST00000264834.6">
    <property type="protein sequence ID" value="ENSP00000264834.3"/>
    <property type="gene ID" value="ENSG00000105610.6"/>
</dbReference>
<dbReference type="GeneID" id="10661"/>
<dbReference type="KEGG" id="hsa:10661"/>
<dbReference type="MANE-Select" id="ENST00000264834.6">
    <property type="protein sequence ID" value="ENSP00000264834.3"/>
    <property type="RefSeq nucleotide sequence ID" value="NM_006563.5"/>
    <property type="RefSeq protein sequence ID" value="NP_006554.1"/>
</dbReference>
<dbReference type="UCSC" id="uc002mvo.4">
    <property type="organism name" value="human"/>
</dbReference>
<dbReference type="AGR" id="HGNC:6345"/>
<dbReference type="CTD" id="10661"/>
<dbReference type="DisGeNET" id="10661"/>
<dbReference type="GeneCards" id="KLF1"/>
<dbReference type="HGNC" id="HGNC:6345">
    <property type="gene designation" value="KLF1"/>
</dbReference>
<dbReference type="HPA" id="ENSG00000105610">
    <property type="expression patterns" value="Tissue enriched (bone)"/>
</dbReference>
<dbReference type="MalaCards" id="KLF1"/>
<dbReference type="MIM" id="111150">
    <property type="type" value="phenotype"/>
</dbReference>
<dbReference type="MIM" id="600599">
    <property type="type" value="gene"/>
</dbReference>
<dbReference type="MIM" id="613566">
    <property type="type" value="phenotype"/>
</dbReference>
<dbReference type="MIM" id="613673">
    <property type="type" value="phenotype"/>
</dbReference>
<dbReference type="MIM" id="620969">
    <property type="type" value="phenotype"/>
</dbReference>
<dbReference type="neXtProt" id="NX_Q13351"/>
<dbReference type="OpenTargets" id="ENSG00000105610"/>
<dbReference type="Orphanet" id="293825">
    <property type="disease" value="Congenital dyserythropoietic anemia type IV"/>
</dbReference>
<dbReference type="Orphanet" id="46532">
    <property type="disease" value="Hereditary persistence of fetal hemoglobin-beta-thalassemia syndrome"/>
</dbReference>
<dbReference type="Orphanet" id="251380">
    <property type="disease" value="Hereditary persistence of fetal hemoglobin-sickle cell disease syndrome"/>
</dbReference>
<dbReference type="PharmGKB" id="PA30131"/>
<dbReference type="VEuPathDB" id="HostDB:ENSG00000105610"/>
<dbReference type="eggNOG" id="KOG1721">
    <property type="taxonomic scope" value="Eukaryota"/>
</dbReference>
<dbReference type="GeneTree" id="ENSGT00940000161856"/>
<dbReference type="HOGENOM" id="CLU_063878_0_0_1"/>
<dbReference type="InParanoid" id="Q13351"/>
<dbReference type="OMA" id="PFPDTQE"/>
<dbReference type="OrthoDB" id="4748970at2759"/>
<dbReference type="PAN-GO" id="Q13351">
    <property type="GO annotations" value="3 GO annotations based on evolutionary models"/>
</dbReference>
<dbReference type="PhylomeDB" id="Q13351"/>
<dbReference type="TreeFam" id="TF350556"/>
<dbReference type="PathwayCommons" id="Q13351"/>
<dbReference type="SignaLink" id="Q13351"/>
<dbReference type="SIGNOR" id="Q13351"/>
<dbReference type="BioGRID-ORCS" id="10661">
    <property type="hits" value="47 hits in 1183 CRISPR screens"/>
</dbReference>
<dbReference type="EvolutionaryTrace" id="Q13351"/>
<dbReference type="GenomeRNAi" id="10661"/>
<dbReference type="Pharos" id="Q13351">
    <property type="development level" value="Tbio"/>
</dbReference>
<dbReference type="PRO" id="PR:Q13351"/>
<dbReference type="Proteomes" id="UP000005640">
    <property type="component" value="Chromosome 19"/>
</dbReference>
<dbReference type="RNAct" id="Q13351">
    <property type="molecule type" value="protein"/>
</dbReference>
<dbReference type="Bgee" id="ENSG00000105610">
    <property type="expression patterns" value="Expressed in trabecular bone tissue and 63 other cell types or tissues"/>
</dbReference>
<dbReference type="GO" id="GO:0000785">
    <property type="term" value="C:chromatin"/>
    <property type="evidence" value="ECO:0000314"/>
    <property type="project" value="BHF-UCL"/>
</dbReference>
<dbReference type="GO" id="GO:0005654">
    <property type="term" value="C:nucleoplasm"/>
    <property type="evidence" value="ECO:0000314"/>
    <property type="project" value="HPA"/>
</dbReference>
<dbReference type="GO" id="GO:0005634">
    <property type="term" value="C:nucleus"/>
    <property type="evidence" value="ECO:0000314"/>
    <property type="project" value="UniProtKB"/>
</dbReference>
<dbReference type="GO" id="GO:0003700">
    <property type="term" value="F:DNA-binding transcription factor activity"/>
    <property type="evidence" value="ECO:0000304"/>
    <property type="project" value="ProtInc"/>
</dbReference>
<dbReference type="GO" id="GO:0000981">
    <property type="term" value="F:DNA-binding transcription factor activity, RNA polymerase II-specific"/>
    <property type="evidence" value="ECO:0000247"/>
    <property type="project" value="NTNU_SB"/>
</dbReference>
<dbReference type="GO" id="GO:0000978">
    <property type="term" value="F:RNA polymerase II cis-regulatory region sequence-specific DNA binding"/>
    <property type="evidence" value="ECO:0000314"/>
    <property type="project" value="BHF-UCL"/>
</dbReference>
<dbReference type="GO" id="GO:0000976">
    <property type="term" value="F:transcription cis-regulatory region binding"/>
    <property type="evidence" value="ECO:0000314"/>
    <property type="project" value="UniProtKB"/>
</dbReference>
<dbReference type="GO" id="GO:0043130">
    <property type="term" value="F:ubiquitin binding"/>
    <property type="evidence" value="ECO:0000315"/>
    <property type="project" value="DisProt"/>
</dbReference>
<dbReference type="GO" id="GO:0008270">
    <property type="term" value="F:zinc ion binding"/>
    <property type="evidence" value="ECO:0007669"/>
    <property type="project" value="UniProtKB-KW"/>
</dbReference>
<dbReference type="GO" id="GO:1901653">
    <property type="term" value="P:cellular response to peptide"/>
    <property type="evidence" value="ECO:0007669"/>
    <property type="project" value="Ensembl"/>
</dbReference>
<dbReference type="GO" id="GO:0030218">
    <property type="term" value="P:erythrocyte differentiation"/>
    <property type="evidence" value="ECO:0000315"/>
    <property type="project" value="UniProtKB"/>
</dbReference>
<dbReference type="GO" id="GO:0060135">
    <property type="term" value="P:maternal process involved in female pregnancy"/>
    <property type="evidence" value="ECO:0007669"/>
    <property type="project" value="Ensembl"/>
</dbReference>
<dbReference type="GO" id="GO:0045893">
    <property type="term" value="P:positive regulation of DNA-templated transcription"/>
    <property type="evidence" value="ECO:0000314"/>
    <property type="project" value="UniProtKB"/>
</dbReference>
<dbReference type="GO" id="GO:0031648">
    <property type="term" value="P:protein destabilization"/>
    <property type="evidence" value="ECO:0000270"/>
    <property type="project" value="DisProt"/>
</dbReference>
<dbReference type="GO" id="GO:0006355">
    <property type="term" value="P:regulation of DNA-templated transcription"/>
    <property type="evidence" value="ECO:0000315"/>
    <property type="project" value="UniProtKB"/>
</dbReference>
<dbReference type="GO" id="GO:0006357">
    <property type="term" value="P:regulation of transcription by RNA polymerase II"/>
    <property type="evidence" value="ECO:0000318"/>
    <property type="project" value="GO_Central"/>
</dbReference>
<dbReference type="GO" id="GO:0006511">
    <property type="term" value="P:ubiquitin-dependent protein catabolic process"/>
    <property type="evidence" value="ECO:0000270"/>
    <property type="project" value="DisProt"/>
</dbReference>
<dbReference type="CDD" id="cd21581">
    <property type="entry name" value="KLF1_N"/>
    <property type="match status" value="1"/>
</dbReference>
<dbReference type="DisProt" id="DP01640"/>
<dbReference type="FunFam" id="3.30.160.60:FF:000018">
    <property type="entry name" value="Krueppel-like factor 15"/>
    <property type="match status" value="1"/>
</dbReference>
<dbReference type="FunFam" id="3.30.160.60:FF:000237">
    <property type="entry name" value="Krueppel-like factor 2"/>
    <property type="match status" value="1"/>
</dbReference>
<dbReference type="FunFam" id="3.30.160.60:FF:000707">
    <property type="entry name" value="Putative Krueppel-like factor 1"/>
    <property type="match status" value="1"/>
</dbReference>
<dbReference type="Gene3D" id="3.30.160.60">
    <property type="entry name" value="Classic Zinc Finger"/>
    <property type="match status" value="3"/>
</dbReference>
<dbReference type="IDEAL" id="IID00468"/>
<dbReference type="InterPro" id="IPR031786">
    <property type="entry name" value="EKLF_TAD1"/>
</dbReference>
<dbReference type="InterPro" id="IPR031784">
    <property type="entry name" value="EKLF_TAD2"/>
</dbReference>
<dbReference type="InterPro" id="IPR036236">
    <property type="entry name" value="Znf_C2H2_sf"/>
</dbReference>
<dbReference type="InterPro" id="IPR013087">
    <property type="entry name" value="Znf_C2H2_type"/>
</dbReference>
<dbReference type="PANTHER" id="PTHR23235:SF133">
    <property type="entry name" value="KRUEPPEL-LIKE FACTOR 1"/>
    <property type="match status" value="1"/>
</dbReference>
<dbReference type="PANTHER" id="PTHR23235">
    <property type="entry name" value="KRUEPPEL-LIKE TRANSCRIPTION FACTOR"/>
    <property type="match status" value="1"/>
</dbReference>
<dbReference type="Pfam" id="PF16832">
    <property type="entry name" value="EKLF_TAD1"/>
    <property type="match status" value="1"/>
</dbReference>
<dbReference type="Pfam" id="PF16833">
    <property type="entry name" value="EKLF_TAD2"/>
    <property type="match status" value="1"/>
</dbReference>
<dbReference type="Pfam" id="PF00096">
    <property type="entry name" value="zf-C2H2"/>
    <property type="match status" value="3"/>
</dbReference>
<dbReference type="SMART" id="SM00355">
    <property type="entry name" value="ZnF_C2H2"/>
    <property type="match status" value="3"/>
</dbReference>
<dbReference type="SUPFAM" id="SSF57667">
    <property type="entry name" value="beta-beta-alpha zinc fingers"/>
    <property type="match status" value="2"/>
</dbReference>
<dbReference type="PROSITE" id="PS00028">
    <property type="entry name" value="ZINC_FINGER_C2H2_1"/>
    <property type="match status" value="3"/>
</dbReference>
<dbReference type="PROSITE" id="PS50157">
    <property type="entry name" value="ZINC_FINGER_C2H2_2"/>
    <property type="match status" value="3"/>
</dbReference>
<accession>Q13351</accession>
<accession>Q6PIJ5</accession>
<accession>Q92899</accession>
<proteinExistence type="evidence at protein level"/>
<evidence type="ECO:0000250" key="1"/>
<evidence type="ECO:0000250" key="2">
    <source>
        <dbReference type="UniProtKB" id="P46099"/>
    </source>
</evidence>
<evidence type="ECO:0000255" key="3">
    <source>
        <dbReference type="PROSITE-ProRule" id="PRU00042"/>
    </source>
</evidence>
<evidence type="ECO:0000256" key="4">
    <source>
        <dbReference type="SAM" id="MobiDB-lite"/>
    </source>
</evidence>
<evidence type="ECO:0000269" key="5">
    <source>
    </source>
</evidence>
<evidence type="ECO:0000269" key="6">
    <source>
    </source>
</evidence>
<evidence type="ECO:0000269" key="7">
    <source>
    </source>
</evidence>
<evidence type="ECO:0000269" key="8">
    <source>
    </source>
</evidence>
<evidence type="ECO:0000269" key="9">
    <source>
    </source>
</evidence>
<evidence type="ECO:0000269" key="10">
    <source>
    </source>
</evidence>
<evidence type="ECO:0000269" key="11">
    <source>
    </source>
</evidence>
<evidence type="ECO:0000269" key="12">
    <source>
    </source>
</evidence>
<evidence type="ECO:0000269" key="13">
    <source>
    </source>
</evidence>
<evidence type="ECO:0000269" key="14">
    <source>
    </source>
</evidence>
<evidence type="ECO:0000269" key="15">
    <source>
    </source>
</evidence>
<evidence type="ECO:0000269" key="16">
    <source>
    </source>
</evidence>
<evidence type="ECO:0000269" key="17">
    <source>
    </source>
</evidence>
<evidence type="ECO:0000269" key="18">
    <source>
    </source>
</evidence>
<evidence type="ECO:0000269" key="19">
    <source>
    </source>
</evidence>
<evidence type="ECO:0000269" key="20">
    <source>
    </source>
</evidence>
<evidence type="ECO:0000269" key="21">
    <source>
    </source>
</evidence>
<evidence type="ECO:0000269" key="22">
    <source>
    </source>
</evidence>
<evidence type="ECO:0000269" key="23">
    <source>
    </source>
</evidence>
<evidence type="ECO:0000269" key="24">
    <source>
    </source>
</evidence>
<evidence type="ECO:0000305" key="25"/>
<evidence type="ECO:0007829" key="26">
    <source>
        <dbReference type="PDB" id="2L2I"/>
    </source>
</evidence>
<evidence type="ECO:0007829" key="27">
    <source>
        <dbReference type="PDB" id="2MBH"/>
    </source>
</evidence>
<reference key="1">
    <citation type="journal article" date="1996" name="DNA Cell Biol.">
        <title>Isolation, genomic structure, and expression of human erythroid Kruppel-like factor (EKLF).</title>
        <authorList>
            <person name="Bieker J.J."/>
        </authorList>
    </citation>
    <scope>NUCLEOTIDE SEQUENCE [GENOMIC DNA]</scope>
    <scope>TISSUE SPECIFICITY</scope>
</reference>
<reference key="2">
    <citation type="journal article" date="1997" name="Genomics">
        <title>The human erythroid-specific transcription factor EKLF localizes to chromosome 19p13.12-p13.13.</title>
        <authorList>
            <person name="van Ree J.H."/>
            <person name="Roskrow M.A."/>
            <person name="Becher A.M."/>
            <person name="McNall R."/>
            <person name="Valentine V.A."/>
            <person name="Jane S.M."/>
            <person name="Cunningham J.M."/>
        </authorList>
    </citation>
    <scope>NUCLEOTIDE SEQUENCE [MRNA]</scope>
    <scope>TISSUE SPECIFICITY</scope>
</reference>
<reference key="3">
    <citation type="journal article" date="2004" name="Nature">
        <title>The DNA sequence and biology of human chromosome 19.</title>
        <authorList>
            <person name="Grimwood J."/>
            <person name="Gordon L.A."/>
            <person name="Olsen A.S."/>
            <person name="Terry A."/>
            <person name="Schmutz J."/>
            <person name="Lamerdin J.E."/>
            <person name="Hellsten U."/>
            <person name="Goodstein D."/>
            <person name="Couronne O."/>
            <person name="Tran-Gyamfi M."/>
            <person name="Aerts A."/>
            <person name="Altherr M."/>
            <person name="Ashworth L."/>
            <person name="Bajorek E."/>
            <person name="Black S."/>
            <person name="Branscomb E."/>
            <person name="Caenepeel S."/>
            <person name="Carrano A.V."/>
            <person name="Caoile C."/>
            <person name="Chan Y.M."/>
            <person name="Christensen M."/>
            <person name="Cleland C.A."/>
            <person name="Copeland A."/>
            <person name="Dalin E."/>
            <person name="Dehal P."/>
            <person name="Denys M."/>
            <person name="Detter J.C."/>
            <person name="Escobar J."/>
            <person name="Flowers D."/>
            <person name="Fotopulos D."/>
            <person name="Garcia C."/>
            <person name="Georgescu A.M."/>
            <person name="Glavina T."/>
            <person name="Gomez M."/>
            <person name="Gonzales E."/>
            <person name="Groza M."/>
            <person name="Hammon N."/>
            <person name="Hawkins T."/>
            <person name="Haydu L."/>
            <person name="Ho I."/>
            <person name="Huang W."/>
            <person name="Israni S."/>
            <person name="Jett J."/>
            <person name="Kadner K."/>
            <person name="Kimball H."/>
            <person name="Kobayashi A."/>
            <person name="Larionov V."/>
            <person name="Leem S.-H."/>
            <person name="Lopez F."/>
            <person name="Lou Y."/>
            <person name="Lowry S."/>
            <person name="Malfatti S."/>
            <person name="Martinez D."/>
            <person name="McCready P.M."/>
            <person name="Medina C."/>
            <person name="Morgan J."/>
            <person name="Nelson K."/>
            <person name="Nolan M."/>
            <person name="Ovcharenko I."/>
            <person name="Pitluck S."/>
            <person name="Pollard M."/>
            <person name="Popkie A.P."/>
            <person name="Predki P."/>
            <person name="Quan G."/>
            <person name="Ramirez L."/>
            <person name="Rash S."/>
            <person name="Retterer J."/>
            <person name="Rodriguez A."/>
            <person name="Rogers S."/>
            <person name="Salamov A."/>
            <person name="Salazar A."/>
            <person name="She X."/>
            <person name="Smith D."/>
            <person name="Slezak T."/>
            <person name="Solovyev V."/>
            <person name="Thayer N."/>
            <person name="Tice H."/>
            <person name="Tsai M."/>
            <person name="Ustaszewska A."/>
            <person name="Vo N."/>
            <person name="Wagner M."/>
            <person name="Wheeler J."/>
            <person name="Wu K."/>
            <person name="Xie G."/>
            <person name="Yang J."/>
            <person name="Dubchak I."/>
            <person name="Furey T.S."/>
            <person name="DeJong P."/>
            <person name="Dickson M."/>
            <person name="Gordon D."/>
            <person name="Eichler E.E."/>
            <person name="Pennacchio L.A."/>
            <person name="Richardson P."/>
            <person name="Stubbs L."/>
            <person name="Rokhsar D.S."/>
            <person name="Myers R.M."/>
            <person name="Rubin E.M."/>
            <person name="Lucas S.M."/>
        </authorList>
    </citation>
    <scope>NUCLEOTIDE SEQUENCE [LARGE SCALE GENOMIC DNA]</scope>
</reference>
<reference key="4">
    <citation type="journal article" date="2004" name="Genome Res.">
        <title>The status, quality, and expansion of the NIH full-length cDNA project: the Mammalian Gene Collection (MGC).</title>
        <authorList>
            <consortium name="The MGC Project Team"/>
        </authorList>
    </citation>
    <scope>NUCLEOTIDE SEQUENCE [LARGE SCALE MRNA]</scope>
    <scope>VARIANT PRO-102</scope>
    <source>
        <tissue>Lung</tissue>
    </source>
</reference>
<reference key="5">
    <citation type="journal article" date="1998" name="Proc. Natl. Acad. Sci. U.S.A.">
        <title>Acetylation and modulation of erythroid Krueppel-like factor (EKLF) activity by interaction with histone acetyltransferases.</title>
        <authorList>
            <person name="Zhang W."/>
            <person name="Bieker J.J."/>
        </authorList>
    </citation>
    <scope>ACETYLATION</scope>
    <scope>INTERACTION WITH CBP; EP300 AND PCAF</scope>
</reference>
<reference key="6">
    <citation type="journal article" date="2010" name="Nat. Genet.">
        <title>Haploinsufficiency for the erythroid transcription factor KLF1 causes hereditary persistence of fetal hemoglobin.</title>
        <authorList>
            <person name="Borg J."/>
            <person name="Papadopoulos P."/>
            <person name="Georgitsi M."/>
            <person name="Gutierrez L."/>
            <person name="Grech G."/>
            <person name="Fanis P."/>
            <person name="Phylactides M."/>
            <person name="Verkerk A.J."/>
            <person name="van der Spek P.J."/>
            <person name="Scerri C.A."/>
            <person name="Cassar W."/>
            <person name="Galdies R."/>
            <person name="van Ijcken W."/>
            <person name="Ozgur Z."/>
            <person name="Gillemans N."/>
            <person name="Hou J."/>
            <person name="Bugeja M."/>
            <person name="Grosveld F.G."/>
            <person name="von Lindern M."/>
            <person name="Felice A.E."/>
            <person name="Patrinos G.P."/>
            <person name="Philipsen S."/>
        </authorList>
    </citation>
    <scope>FUNCTION AS REGULATOR OF FETAL-TO-ADULT GLOBIN SWITCHING</scope>
    <scope>POLYMORPHISM</scope>
</reference>
<reference key="7">
    <citation type="journal article" date="2020" name="Cell. Mol. Life Sci.">
        <title>The evolution of the 9aaTAD domain in Sp2 proteins: inactivation with valines and intron reservoirs.</title>
        <authorList>
            <person name="Piskacek M."/>
            <person name="Havelka M."/>
            <person name="Jendruchova K."/>
            <person name="Knight A."/>
            <person name="Keegan L.P."/>
        </authorList>
    </citation>
    <scope>9AATAD MOTIF</scope>
</reference>
<reference key="8">
    <citation type="journal article" date="2011" name="Proc. Natl. Acad. Sci. U.S.A.">
        <title>Structural and functional characterization of an atypical activation domain in erythroid Kruppel-like factor (EKLF).</title>
        <authorList>
            <person name="Mas C."/>
            <person name="Lussier-Price M."/>
            <person name="Soni S."/>
            <person name="Morse T."/>
            <person name="Arseneault G."/>
            <person name="Di Lello P."/>
            <person name="Lafrance-Vanasse J."/>
            <person name="Bieker J.J."/>
            <person name="Omichinski J.G."/>
        </authorList>
    </citation>
    <scope>STRUCTURE BY NMR OF 51-90 IN COMPLEX WITH YEAST TFB1</scope>
    <scope>FUNCTION</scope>
    <scope>INTERACTION WITH TFB1; CREBBP AND EP300</scope>
</reference>
<reference key="9">
    <citation type="journal article" date="2008" name="Blood">
        <title>Mutations in EKLF/KLF1 form the molecular basis of the rare blood group In(Lu) phenotype.</title>
        <authorList>
            <person name="Singleton B.K."/>
            <person name="Burton N.M."/>
            <person name="Green C."/>
            <person name="Brady R.L."/>
            <person name="Anstee D.J."/>
        </authorList>
    </citation>
    <scope>VARIANTS BLOOD GROUP-IN(LU) TYR-299; LEU-328; HIS-328 AND GLY-331</scope>
    <scope>POLYMORPHISM</scope>
</reference>
<reference key="10">
    <citation type="journal article" date="2010" name="Am. J. Hum. Genet.">
        <title>A dominant mutation in the gene encoding the erythroid transcription factor KLF1 causes a congenital dyserythropoietic anemia.</title>
        <authorList>
            <person name="Arnaud L."/>
            <person name="Saison C."/>
            <person name="Helias V."/>
            <person name="Lucien N."/>
            <person name="Steschenko D."/>
            <person name="Giarratana M.C."/>
            <person name="Prehu C."/>
            <person name="Foliguet B."/>
            <person name="Montout L."/>
            <person name="de Brevern A.G."/>
            <person name="Francina A."/>
            <person name="Ripoche P."/>
            <person name="Fenneteau O."/>
            <person name="Da Costa L."/>
            <person name="Peyrard T."/>
            <person name="Coghlan G."/>
            <person name="Illum N."/>
            <person name="Birgens H."/>
            <person name="Tamary H."/>
            <person name="Iolascon A."/>
            <person name="Delaunay J."/>
            <person name="Tchernia G."/>
            <person name="Cartron J.P."/>
        </authorList>
    </citation>
    <scope>VARIANT PRO-102</scope>
    <scope>VARIANT CDAN4A LYS-325</scope>
    <scope>CHARACTERIZATION OF VARIANT CDAN4A LYS-325</scope>
    <scope>INVOLVEMENT IN CDAN4A</scope>
    <scope>ROLE IN ERYTHROPOIESIS</scope>
    <scope>FUNCTION AS TRANSCRIPTIONAL ACTIVATOR OF CD44 AND AQP1</scope>
    <scope>SUBCELLULAR LOCATION</scope>
</reference>
<reference key="11">
    <citation type="journal article" date="2013" name="Blood Cells Mol. Dis.">
        <title>Erythroid transcription factor EKLF/KLF1 mutation causing congenital dyserythropoietic anemia type IV in a patient of Taiwanese origin: review of all reported cases and development of a clinical diagnostic paradigm.</title>
        <authorList>
            <person name="Jaffray J.A."/>
            <person name="Mitchell W.B."/>
            <person name="Gnanapragasam M.N."/>
            <person name="Seshan S.V."/>
            <person name="Guo X."/>
            <person name="Westhoff C.M."/>
            <person name="Bieker J.J."/>
            <person name="Manwani D."/>
        </authorList>
    </citation>
    <scope>VARIANT CDAN4A LYS-325</scope>
</reference>
<reference key="12">
    <citation type="journal article" date="2013" name="Hum. Mutat.">
        <title>Molecular analysis of the rare in(Lu) blood type: toward decoding the phenotypic outcome of haploinsufficiency for the transcription factor KLF1.</title>
        <authorList>
            <person name="Helias V."/>
            <person name="Saison C."/>
            <person name="Peyrard T."/>
            <person name="Vera E."/>
            <person name="Prehu C."/>
            <person name="Cartron J.P."/>
            <person name="Arnaud L."/>
        </authorList>
    </citation>
    <scope>VARIANTS BLOOD GROUP-IN(LU) 197-TYR--LEU-362 DEL; GLU-288; ARG-326 AND GLN-357</scope>
    <scope>CHARACTERIZATION OF VARIANTS BLOOD GROUP-IN(LU) GLU-288; ARG-326 AND GLN-357</scope>
    <scope>POLYMORPHISM</scope>
    <scope>VARIANTS PRO-102; VAL-104 AND LEU-182</scope>
</reference>
<reference key="13">
    <citation type="journal article" date="2014" name="Blood">
        <title>Mutations in Kruppel-like factor 1 cause transfusion-dependent hemolytic anemia and persistence of embryonic globin gene expression.</title>
        <authorList>
            <person name="Viprakasit V."/>
            <person name="Ekwattanakit S."/>
            <person name="Riolueang S."/>
            <person name="Chalaow N."/>
            <person name="Fisher C."/>
            <person name="Lower K."/>
            <person name="Kanno H."/>
            <person name="Tachavanich K."/>
            <person name="Bejrachandra S."/>
            <person name="Saipin J."/>
            <person name="Juntharaniyom M."/>
            <person name="Sanpakit K."/>
            <person name="Tanphaichitr V.S."/>
            <person name="Songdej D."/>
            <person name="Babbs C."/>
            <person name="Gibbons R.J."/>
            <person name="Philipsen S."/>
            <person name="Higgs D.R."/>
        </authorList>
    </citation>
    <scope>VARIANTS CDAN4B 58-GLN--LEU-362 DEL; PRO-298; HIS-301; TRP-331 AND ARG-335</scope>
</reference>
<reference key="14">
    <citation type="journal article" date="2014" name="Blood">
        <title>KLF1 mutations are relatively more common in a thalassemia endemic region and ameliorate the severity of beta-thalassemia.</title>
        <authorList>
            <person name="Liu D."/>
            <person name="Zhang X."/>
            <person name="Yu L."/>
            <person name="Cai R."/>
            <person name="Ma X."/>
            <person name="Zheng C."/>
            <person name="Zhou Y."/>
            <person name="Liu Q."/>
            <person name="Wei X."/>
            <person name="Lin L."/>
            <person name="Yan T."/>
            <person name="Huang J."/>
            <person name="Mohandas N."/>
            <person name="An X."/>
            <person name="Xu X."/>
        </authorList>
    </citation>
    <scope>VARIANTS LYS-5; PRO-298; ASP-299; ARG-334 AND TYR-341</scope>
</reference>
<reference key="15">
    <citation type="journal article" date="2015" name="Eur. J. Hum. Genet.">
        <title>Compound heterozygosity for KLF1 mutations is associated with microcytic hypochromic anemia and increased fetal hemoglobin.</title>
        <authorList>
            <person name="Huang J."/>
            <person name="Zhang X."/>
            <person name="Liu D."/>
            <person name="Wei X."/>
            <person name="Shang X."/>
            <person name="Xiong F."/>
            <person name="Yu L."/>
            <person name="Yin X."/>
            <person name="Xu X."/>
        </authorList>
    </citation>
    <scope>VARIANTS CDAN4B PRO-298 AND SER-338</scope>
    <scope>CHARACTERIZATION OF VARIANTS CDAN4B PRO-298 AND SER-338</scope>
    <scope>INVOLVEMENT IN CDAN4B</scope>
    <scope>FUNCTION</scope>
    <scope>SUBCELLULAR LOCATION</scope>
</reference>
<reference key="16">
    <citation type="journal article" date="2015" name="Hemoglobin">
        <title>A new Krueppel-like factor 1 mutation (c.947G &gt; A or p.C316Y) in humans causes beta-thalassemia minor.</title>
        <authorList>
            <person name="Nitta T."/>
            <person name="Kawano F."/>
            <person name="Yamashiro Y."/>
            <person name="Takagi F."/>
            <person name="Murata T."/>
            <person name="Tanaka T."/>
            <person name="Ferania M."/>
            <person name="Adhiyanto C."/>
            <person name="Hattori Y."/>
        </authorList>
    </citation>
    <scope>VARIANT TRP-316</scope>
</reference>
<reference key="17">
    <citation type="journal article" date="2016" name="Hemoglobin">
        <title>An unusual hydrops fetalis associated with compound heterozygosity for Krueppel-like factor 1 mutations.</title>
        <authorList>
            <person name="Lee H.H."/>
            <person name="Mak A.S."/>
            <person name="Kou K.O."/>
            <person name="Poon C.F."/>
            <person name="Wong W.S."/>
            <person name="Chiu K.H."/>
            <person name="Au P.K."/>
            <person name="Chan K.Y."/>
            <person name="Kan A.S."/>
            <person name="Tang M.H."/>
            <person name="Leung K.Y."/>
        </authorList>
    </citation>
    <scope>VARIANT CDAN4B THR-338</scope>
</reference>
<reference key="18">
    <citation type="journal article" date="2018" name="J. Pediatr. Hematol. Oncol.">
        <title>A Case of Congenital Dyserythropoeitic Anemia Type IV Caused by E325K Mutation in Erythroid Transcription Factor KLF1.</title>
        <authorList>
            <person name="Ortolano R."/>
            <person name="Forouhar M."/>
            <person name="Warwick A."/>
            <person name="Harper D."/>
        </authorList>
    </citation>
    <scope>VARIANT CDAN4A LYS-325</scope>
</reference>
<reference key="19">
    <citation type="journal article" date="2018" name="J. Pediatr. Hematol. Oncol.">
        <title>KLF1 E325K-associated Congenital Dyserythropoietic Anemia Type IV: Insights Into the Variable Clinical Severity.</title>
        <authorList>
            <person name="Ravindranath Y."/>
            <person name="Johnson R.M."/>
            <person name="Goyette G."/>
            <person name="Buck S."/>
            <person name="Gadgeel M."/>
            <person name="Gallagher P.G."/>
        </authorList>
    </citation>
    <scope>VARIANT CDAN4A LYS-325</scope>
</reference>
<reference key="20">
    <citation type="journal article" date="2019" name="BMC Genomics">
        <title>Corrupted DNA-binding specificity and ectopic transcription underpin dominant neomorphic mutations in KLF/SP transcription factors.</title>
        <authorList>
            <person name="Ilsley M.D."/>
            <person name="Huang S."/>
            <person name="Magor G.W."/>
            <person name="Landsberg M.J."/>
            <person name="Gillinder K.R."/>
            <person name="Perkins A.C."/>
        </authorList>
    </citation>
    <scope>CHARACTERIZATION OF VARIANT CDAN4A LYS-325</scope>
</reference>
<reference key="21">
    <citation type="journal article" date="2020" name="Mol. Cell. Biol.">
        <title>A Krueppel-like factor 1 (KLF1) Mutation Associated with Severe Congenital Dyserythropoietic Anemia Alters Its DNA-Binding Specificity.</title>
        <authorList>
            <person name="Kulczynska K."/>
            <person name="Bieker J.J."/>
            <person name="Siatecka M."/>
        </authorList>
    </citation>
    <scope>CHARACTERIZATION OF VARIANT CDAN4A LYS-325</scope>
</reference>
<name>KLF1_HUMAN</name>
<gene>
    <name type="primary">KLF1</name>
    <name type="synonym">EKLF</name>
</gene>
<keyword id="KW-0002">3D-structure</keyword>
<keyword id="KW-0007">Acetylation</keyword>
<keyword id="KW-0010">Activator</keyword>
<keyword id="KW-1055">Congenital dyserythropoietic anemia</keyword>
<keyword id="KW-0225">Disease variant</keyword>
<keyword id="KW-0238">DNA-binding</keyword>
<keyword id="KW-0360">Hereditary hemolytic anemia</keyword>
<keyword id="KW-1017">Isopeptide bond</keyword>
<keyword id="KW-0479">Metal-binding</keyword>
<keyword id="KW-0488">Methylation</keyword>
<keyword id="KW-0539">Nucleus</keyword>
<keyword id="KW-0597">Phosphoprotein</keyword>
<keyword id="KW-1267">Proteomics identification</keyword>
<keyword id="KW-1185">Reference proteome</keyword>
<keyword id="KW-0677">Repeat</keyword>
<keyword id="KW-0804">Transcription</keyword>
<keyword id="KW-0805">Transcription regulation</keyword>
<keyword id="KW-0832">Ubl conjugation</keyword>
<keyword id="KW-0862">Zinc</keyword>
<keyword id="KW-0863">Zinc-finger</keyword>
<feature type="chain" id="PRO_0000047160" description="Krueppel-like factor 1">
    <location>
        <begin position="1"/>
        <end position="362"/>
    </location>
</feature>
<feature type="zinc finger region" description="C2H2-type 1" evidence="3">
    <location>
        <begin position="279"/>
        <end position="303"/>
    </location>
</feature>
<feature type="zinc finger region" description="C2H2-type 2" evidence="3">
    <location>
        <begin position="309"/>
        <end position="333"/>
    </location>
</feature>
<feature type="zinc finger region" description="C2H2-type 3" evidence="3">
    <location>
        <begin position="339"/>
        <end position="361"/>
    </location>
</feature>
<feature type="region of interest" description="Disordered" evidence="4">
    <location>
        <begin position="1"/>
        <end position="110"/>
    </location>
</feature>
<feature type="region of interest" description="Disordered" evidence="4">
    <location>
        <begin position="249"/>
        <end position="271"/>
    </location>
</feature>
<feature type="short sequence motif" description="9aaTAD" evidence="20">
    <location>
        <begin position="71"/>
        <end position="79"/>
    </location>
</feature>
<feature type="compositionally biased region" description="Basic and acidic residues" evidence="4">
    <location>
        <begin position="26"/>
        <end position="35"/>
    </location>
</feature>
<feature type="compositionally biased region" description="Acidic residues" evidence="4">
    <location>
        <begin position="58"/>
        <end position="67"/>
    </location>
</feature>
<feature type="modified residue" description="Phosphothreonine; by CK2" evidence="2 25">
    <location>
        <position position="23"/>
    </location>
</feature>
<feature type="modified residue" description="Omega-N-methylarginine" evidence="2">
    <location>
        <position position="184"/>
    </location>
</feature>
<feature type="modified residue" description="N6-acetyllysine" evidence="2">
    <location>
        <position position="274"/>
    </location>
</feature>
<feature type="modified residue" description="N6-acetyllysine" evidence="2">
    <location>
        <position position="288"/>
    </location>
</feature>
<feature type="cross-link" description="Glycyl lysine isopeptide (Lys-Gly) (interchain with G-Cter in SUMO)" evidence="1">
    <location>
        <position position="54"/>
    </location>
</feature>
<feature type="sequence variant" id="VAR_074272" description="In dbSNP:rs483352842." evidence="13">
    <original>E</original>
    <variation>K</variation>
    <location>
        <position position="5"/>
    </location>
</feature>
<feature type="sequence variant" id="VAR_090077" description="In CDAN4B; likely pathogenic." evidence="12">
    <location>
        <begin position="58"/>
        <end position="362"/>
    </location>
</feature>
<feature type="sequence variant" id="VAR_043981" description="In dbSNP:rs2072597." evidence="5 8 10">
    <original>S</original>
    <variation>P</variation>
    <location>
        <position position="102"/>
    </location>
</feature>
<feature type="sequence variant" id="VAR_090078" description="In dbSNP:rs182276666." evidence="10">
    <original>A</original>
    <variation>V</variation>
    <location>
        <position position="104"/>
    </location>
</feature>
<feature type="sequence variant" id="VAR_043982" description="In dbSNP:rs2072596." evidence="10">
    <original>F</original>
    <variation>L</variation>
    <location>
        <position position="182"/>
    </location>
</feature>
<feature type="sequence variant" id="VAR_090079" description="In blood group-In(Lu)." evidence="10">
    <location>
        <begin position="197"/>
        <end position="362"/>
    </location>
</feature>
<feature type="sequence variant" id="VAR_090080" description="In blood group-In(Lu); decreased transcriptional activity shown in a BCAM promoter-driven luciferase assay; dbSNP:rs267607202." evidence="10">
    <original>K</original>
    <variation>E</variation>
    <location>
        <position position="288"/>
    </location>
</feature>
<feature type="sequence variant" id="VAR_072737" description="In CDAN4B; pathogenic; decreased transcriptional activity; no effect on protein abundance; no effect on protein localization; dbSNP:rs387907598." evidence="12 13 14">
    <original>A</original>
    <variation>P</variation>
    <location>
        <position position="298"/>
    </location>
</feature>
<feature type="sequence variant" id="VAR_074273" description="Found in patients with beta-thalassemia and borderline hemoglobin A2 levels; uncertain significance; dbSNP:rs137852688." evidence="13">
    <original>H</original>
    <variation>D</variation>
    <location>
        <position position="299"/>
    </location>
</feature>
<feature type="sequence variant" id="VAR_058108" description="In blood group-In(Lu); dbSNP:rs137852688." evidence="6">
    <original>H</original>
    <variation>Y</variation>
    <location>
        <position position="299"/>
    </location>
</feature>
<feature type="sequence variant" id="VAR_090081" description="In CDAN4B; likely pathogenic." evidence="12">
    <original>R</original>
    <variation>H</variation>
    <location>
        <position position="301"/>
    </location>
</feature>
<feature type="sequence variant" id="VAR_074274" evidence="15">
    <original>C</original>
    <variation>W</variation>
    <location>
        <position position="316"/>
    </location>
</feature>
<feature type="sequence variant" id="VAR_064901" description="In CDAN4A; pathogenic; has a dominant-negative effect on the transcriptional activation of CD44 and AQP1 promoters; the orthologous mouse mutation alters DNA-binding specificity resulting in ectopic transcription of non-erythroid genes; dbSNP:rs267607201." evidence="8 11 17 18 19 21">
    <original>E</original>
    <variation>K</variation>
    <location>
        <position position="325"/>
    </location>
</feature>
<feature type="sequence variant" id="VAR_090082" description="In blood group-In(Lu); decreased transcriptional activity shown in a BCAM promoter-driven luciferase assay; dbSNP:rs397514634." evidence="10">
    <original>L</original>
    <variation>R</variation>
    <location>
        <position position="326"/>
    </location>
</feature>
<feature type="sequence variant" id="VAR_058109" description="In blood group-In(Lu); dbSNP:rs140252918." evidence="6">
    <original>R</original>
    <variation>H</variation>
    <location>
        <position position="328"/>
    </location>
</feature>
<feature type="sequence variant" id="VAR_058110" description="In blood group-In(Lu); dbSNP:rs140252918." evidence="6">
    <original>R</original>
    <variation>L</variation>
    <location>
        <position position="328"/>
    </location>
</feature>
<feature type="sequence variant" id="VAR_058111" description="In blood group-In(Lu)." evidence="6">
    <original>R</original>
    <variation>G</variation>
    <location>
        <position position="331"/>
    </location>
</feature>
<feature type="sequence variant" id="VAR_090083" description="In CDAN4B; uncertain significance." evidence="12">
    <original>R</original>
    <variation>W</variation>
    <location>
        <position position="331"/>
    </location>
</feature>
<feature type="sequence variant" id="VAR_074275" description="Found in a patient with borderline hemoglobin A2 levels; uncertain significance; dbSNP:rs483352841." evidence="13">
    <original>T</original>
    <variation>R</variation>
    <location>
        <position position="334"/>
    </location>
</feature>
<feature type="sequence variant" id="VAR_090084" description="In CDAN4B; uncertain significance; dbSNP:rs750987930." evidence="12">
    <original>G</original>
    <variation>R</variation>
    <location>
        <position position="335"/>
    </location>
</feature>
<feature type="sequence variant" id="VAR_072738" description="In CDAN4B; likely pathogenic; decreased transcriptional activity; no effect on protein abundance; no effect on protein localization; dbSNP:rs387907599." evidence="14">
    <original>P</original>
    <variation>S</variation>
    <location>
        <position position="338"/>
    </location>
</feature>
<feature type="sequence variant" id="VAR_090085" description="In CDAN4B; likely pathogenic; dbSNP:rs387907599." evidence="16">
    <original>P</original>
    <variation>T</variation>
    <location>
        <position position="338"/>
    </location>
</feature>
<feature type="sequence variant" id="VAR_074276" description="Found in a patient with borderline hemoglobin A2 levels; uncertain significance; dbSNP:rs483352839." evidence="13">
    <original>C</original>
    <variation>Y</variation>
    <location>
        <position position="341"/>
    </location>
</feature>
<feature type="sequence variant" id="VAR_090086" description="In blood group-In(Lu); decreased transcriptional activity shown in a BCAM promoter-driven luciferase assay; dbSNP:rs398122931." evidence="10">
    <original>H</original>
    <variation>Q</variation>
    <location>
        <position position="357"/>
    </location>
</feature>
<feature type="sequence conflict" description="In Ref. 2; AAC51108." evidence="25" ref="2">
    <original>A</original>
    <variation>G</variation>
    <location>
        <position position="163"/>
    </location>
</feature>
<feature type="sequence conflict" description="In Ref. 2; AAC51108." evidence="25" ref="2">
    <original>P</original>
    <variation>A</variation>
    <location>
        <position position="173"/>
    </location>
</feature>
<feature type="sequence conflict" description="In Ref. 2; AAC51108." evidence="25" ref="2">
    <original>R</original>
    <variation>G</variation>
    <location>
        <position position="184"/>
    </location>
</feature>
<feature type="sequence conflict" description="In Ref. 2; AAC51108." evidence="25" ref="2">
    <original>A</original>
    <variation>E</variation>
    <location>
        <position position="192"/>
    </location>
</feature>
<feature type="helix" evidence="27">
    <location>
        <begin position="24"/>
        <end position="35"/>
    </location>
</feature>
<feature type="strand" evidence="26">
    <location>
        <begin position="64"/>
        <end position="67"/>
    </location>
</feature>
<feature type="strand" evidence="26">
    <location>
        <begin position="70"/>
        <end position="75"/>
    </location>
</feature>
<sequence>MATAETALPSISTLTALGPFPDTQDDFLKWWRSEEAQDMGPGPPDPTEPPLHVKSEDQPGEEEDDERGADATWDLDLLLTNFSGPEPGGAPQTCALAPSEASGAQYPPPPETLGAYAGGPGLVAGLLGSEDHSGWVRPALRARAPDAFVGPALAPAPAPEPKALALQPVYPGPGAGSSGGYFPRTGLSVPAASGAPYGLLSGYPAMYPAPQYQGHFQLFRGLQGPAPGPATSPSFLSCLGPGTVGTGLGGTAEDPGVIAETAPSKRGRRSWARKRQAAHTCAHPGCGKSYTKSSHLKAHLRTHTGEKPYACTWEGCGWRFARSDELTRHYRKHTGQRPFRCQLCPRAFSRSDHLALHMKRHL</sequence>
<comment type="function">
    <text evidence="2 8 14">Transcription regulator of erythrocyte development that probably serves as a general switch factor during erythropoiesis. Is a dual regulator of fetal-to-adult globin switching. Binds to the CACCC box in the beta-globin gene promoter and acts as a preferential activator of this gene. Furthermore, it binds to the BCL11A promoter and activates expression of BCL11A, which in turn represses the HBG1 and HBG2 genes. This dual activity ensures that, in most adults, fetal hemoglobin levels are low. Able to activate CD44 and AQP1 promoters (PubMed:21055716). When sumoylated, acts as a transcriptional repressor by promoting interaction with CDH2/MI2beta and also represses megakaryocytic differentiation.</text>
</comment>
<comment type="subunit">
    <text evidence="1 9 24">Interacts with PCAF; the interaction does not acetylate EKLF and inhibits its transactivation activity (By similarity). Interacts with CREBBP/CBP and EP300; the interactions enhance the transactivation activity. Interacts with TFB1.</text>
</comment>
<comment type="interaction">
    <interactant intactId="EBI-8284732">
        <id>Q13351</id>
    </interactant>
    <interactant intactId="EBI-347528">
        <id>Q07021</id>
        <label>C1QBP</label>
    </interactant>
    <organismsDiffer>false</organismsDiffer>
    <experiments>3</experiments>
</comment>
<comment type="interaction">
    <interactant intactId="EBI-8284732">
        <id>Q13351</id>
    </interactant>
    <interactant intactId="EBI-10961624">
        <id>Q2TAC2-2</id>
        <label>CCDC57</label>
    </interactant>
    <organismsDiffer>false</organismsDiffer>
    <experiments>3</experiments>
</comment>
<comment type="interaction">
    <interactant intactId="EBI-8284732">
        <id>Q13351</id>
    </interactant>
    <interactant intactId="EBI-81215">
        <id>Q92793</id>
        <label>CREBBP</label>
    </interactant>
    <organismsDiffer>false</organismsDiffer>
    <experiments>2</experiments>
</comment>
<comment type="interaction">
    <interactant intactId="EBI-8284732">
        <id>Q13351</id>
    </interactant>
    <interactant intactId="EBI-739789">
        <id>Q92997</id>
        <label>DVL3</label>
    </interactant>
    <organismsDiffer>false</organismsDiffer>
    <experiments>3</experiments>
</comment>
<comment type="interaction">
    <interactant intactId="EBI-8284732">
        <id>Q13351</id>
    </interactant>
    <interactant intactId="EBI-743414">
        <id>O95967</id>
        <label>EFEMP2</label>
    </interactant>
    <organismsDiffer>false</organismsDiffer>
    <experiments>3</experiments>
</comment>
<comment type="interaction">
    <interactant intactId="EBI-8284732">
        <id>Q13351</id>
    </interactant>
    <interactant intactId="EBI-715539">
        <id>P32780</id>
        <label>GTF2H1</label>
    </interactant>
    <organismsDiffer>false</organismsDiffer>
    <experiments>2</experiments>
</comment>
<comment type="interaction">
    <interactant intactId="EBI-8284732">
        <id>Q13351</id>
    </interactant>
    <interactant intactId="EBI-740553">
        <id>P13807</id>
        <label>GYS1</label>
    </interactant>
    <organismsDiffer>false</organismsDiffer>
    <experiments>3</experiments>
</comment>
<comment type="interaction">
    <interactant intactId="EBI-8284732">
        <id>Q13351</id>
    </interactant>
    <interactant intactId="EBI-352986">
        <id>P52597</id>
        <label>HNRNPF</label>
    </interactant>
    <organismsDiffer>false</organismsDiffer>
    <experiments>3</experiments>
</comment>
<comment type="interaction">
    <interactant intactId="EBI-8284732">
        <id>Q13351</id>
    </interactant>
    <interactant intactId="EBI-7060731">
        <id>P61978-2</id>
        <label>HNRNPK</label>
    </interactant>
    <organismsDiffer>false</organismsDiffer>
    <experiments>3</experiments>
</comment>
<comment type="interaction">
    <interactant intactId="EBI-8284732">
        <id>Q13351</id>
    </interactant>
    <interactant intactId="EBI-2340269">
        <id>Q13064</id>
        <label>MKRN3</label>
    </interactant>
    <organismsDiffer>false</organismsDiffer>
    <experiments>3</experiments>
</comment>
<comment type="interaction">
    <interactant intactId="EBI-8284732">
        <id>Q13351</id>
    </interactant>
    <interactant intactId="EBI-11022007">
        <id>Q9HBE1-4</id>
        <label>PATZ1</label>
    </interactant>
    <organismsDiffer>false</organismsDiffer>
    <experiments>3</experiments>
</comment>
<comment type="interaction">
    <interactant intactId="EBI-8284732">
        <id>Q13351</id>
    </interactant>
    <interactant intactId="EBI-946095">
        <id>Q15365</id>
        <label>PCBP1</label>
    </interactant>
    <organismsDiffer>false</organismsDiffer>
    <experiments>3</experiments>
</comment>
<comment type="interaction">
    <interactant intactId="EBI-8284732">
        <id>Q13351</id>
    </interactant>
    <interactant intactId="EBI-2803328">
        <id>P79522</id>
        <label>PRR3</label>
    </interactant>
    <organismsDiffer>false</organismsDiffer>
    <experiments>3</experiments>
</comment>
<comment type="interaction">
    <interactant intactId="EBI-8284732">
        <id>Q13351</id>
    </interactant>
    <interactant intactId="EBI-721525">
        <id>P98175</id>
        <label>RBM10</label>
    </interactant>
    <organismsDiffer>false</organismsDiffer>
    <experiments>3</experiments>
</comment>
<comment type="interaction">
    <interactant intactId="EBI-8284732">
        <id>Q13351</id>
    </interactant>
    <interactant intactId="EBI-715531">
        <id>Q9BQ04</id>
        <label>RBM4B</label>
    </interactant>
    <organismsDiffer>false</organismsDiffer>
    <experiments>3</experiments>
</comment>
<comment type="interaction">
    <interactant intactId="EBI-8284732">
        <id>Q13351</id>
    </interactant>
    <interactant intactId="EBI-11987469">
        <id>Q6ZRY4</id>
        <label>RBPMS2</label>
    </interactant>
    <organismsDiffer>false</organismsDiffer>
    <experiments>3</experiments>
</comment>
<comment type="interaction">
    <interactant intactId="EBI-8284732">
        <id>Q13351</id>
    </interactant>
    <interactant intactId="EBI-766589">
        <id>P09234</id>
        <label>SNRPC</label>
    </interactant>
    <organismsDiffer>false</organismsDiffer>
    <experiments>3</experiments>
</comment>
<comment type="interaction">
    <interactant intactId="EBI-8284732">
        <id>Q13351</id>
    </interactant>
    <interactant intactId="EBI-11064654">
        <id>Q01085-2</id>
        <label>TIAL1</label>
    </interactant>
    <organismsDiffer>false</organismsDiffer>
    <experiments>3</experiments>
</comment>
<comment type="interaction">
    <interactant intactId="EBI-8284732">
        <id>Q13351</id>
    </interactant>
    <interactant intactId="EBI-11741437">
        <id>Q08117-2</id>
        <label>TLE5</label>
    </interactant>
    <organismsDiffer>false</organismsDiffer>
    <experiments>3</experiments>
</comment>
<comment type="interaction">
    <interactant intactId="EBI-8284732">
        <id>Q13351</id>
    </interactant>
    <interactant intactId="EBI-2559305">
        <id>A5D8V6</id>
        <label>VPS37C</label>
    </interactant>
    <organismsDiffer>false</organismsDiffer>
    <experiments>3</experiments>
</comment>
<comment type="interaction">
    <interactant intactId="EBI-8284732">
        <id>Q13351</id>
    </interactant>
    <interactant intactId="EBI-19146">
        <id>P32776</id>
        <label>TFB1</label>
    </interactant>
    <organismsDiffer>true</organismsDiffer>
    <experiments>3</experiments>
</comment>
<comment type="subcellular location">
    <subcellularLocation>
        <location evidence="8 14">Nucleus</location>
    </subcellularLocation>
    <text evidence="1">Colocalizes with SUMO1 in nuclear speckles.</text>
</comment>
<comment type="tissue specificity">
    <text evidence="22 23">Expression restricted to adult bone marrow and fetal liver. Not expressed in myeloid nor lymphoid cell lines.</text>
</comment>
<comment type="domain">
    <text evidence="20">The 9aaTAD motif is a transactivation domain present in a large number of yeast and animal transcription factors.</text>
</comment>
<comment type="PTM">
    <text evidence="1">Acetylated; can be acetylated on both Lys-274 and Lys-288. Acetylation on Lys-274 (by CBP) appears to be the major site affecting EKLF transactivation activity (By similarity).</text>
</comment>
<comment type="PTM">
    <text evidence="1">Sumoylated; sumoylation, promoted by PIAS1, leads to repression of megakaryocyte differentiation. Also promotes the interaction with the CDH4 subunit of the NuRD repression complex (By similarity).</text>
</comment>
<comment type="PTM">
    <text evidence="1">Phosphorylated primarily on serine residues in the transactivation domain. Phosphorylation on Thr-23 is critical for the transactivation activity (By similarity).</text>
</comment>
<comment type="polymorphism">
    <text evidence="7">Genetic variations in KLF1 underlie the fetal hemoglobin quantitative trait locus 6 (HBFQTL6) [MIM:613566]. Classic hereditary persistence of fetal hemoglobin (HPFH) is characterized by a substantial elevation of fetal hemoglobin (HbF) in adult red blood cells. There are no other phenotypic or hematologic manifestations. In healthy adults, fetal hemoglobin (HbF) is present at residual levels (less than 0.06% of total hemoglobin) with over 20-fold variation. Ten to fifteen percent of adults fall within the upper tail of the distribution.</text>
</comment>
<comment type="polymorphism">
    <text evidence="6 10">Genetic variations in KLF1 underlie the blood group-Lutheran inhibitor (In(Lu)) phenotype [MIM:111150]; also known as dominant Lu (a-b-) phenotype. In(Lu) is characterized phenotypically by the apparent absence of the Lu antigen (BCAM) on red blood cells during serologic tests: Lu(a-b-).</text>
</comment>
<comment type="disease" evidence="8 11 17 18 19 21">
    <disease id="DI-02966">
        <name>Anemia, congenital dyserythropoietic, 4A</name>
        <acronym>CDAN4A</acronym>
        <description>An autosomal dominant blood disorder characterized by ineffective erythropoiesis and hemolysis resulting in anemia. Circulating erythroblasts and erythroblasts in the bone marrow show various morphologic abnormalities. Affected individuals also have increased levels of fetal hemoglobin.</description>
        <dbReference type="MIM" id="613673"/>
    </disease>
    <text>The disease is caused by variants affecting the gene represented in this entry.</text>
</comment>
<comment type="disease" evidence="12 14 16">
    <disease id="DI-06957">
        <name>Anemia, congenital dyserythropoietic, 4B</name>
        <acronym>CDAN4B</acronym>
        <description>An autosomal recessive hematologic disorder characterized by neonatal jaundice, hyperbilirubinemia, ineffective erythropoiesis in the bone marrow, and severe congenital hemolytic anemia. Fetal and embryonic hemoglobin are increased and persistent.</description>
        <dbReference type="MIM" id="620969"/>
    </disease>
    <text>The disease is caused by variants affecting the gene represented in this entry.</text>
</comment>
<comment type="similarity">
    <text evidence="25">Belongs to the krueppel C2H2-type zinc-finger protein family.</text>
</comment>